<organism>
    <name type="scientific">Gallus gallus</name>
    <name type="common">Chicken</name>
    <dbReference type="NCBI Taxonomy" id="9031"/>
    <lineage>
        <taxon>Eukaryota</taxon>
        <taxon>Metazoa</taxon>
        <taxon>Chordata</taxon>
        <taxon>Craniata</taxon>
        <taxon>Vertebrata</taxon>
        <taxon>Euteleostomi</taxon>
        <taxon>Archelosauria</taxon>
        <taxon>Archosauria</taxon>
        <taxon>Dinosauria</taxon>
        <taxon>Saurischia</taxon>
        <taxon>Theropoda</taxon>
        <taxon>Coelurosauria</taxon>
        <taxon>Aves</taxon>
        <taxon>Neognathae</taxon>
        <taxon>Galloanserae</taxon>
        <taxon>Galliformes</taxon>
        <taxon>Phasianidae</taxon>
        <taxon>Phasianinae</taxon>
        <taxon>Gallus</taxon>
    </lineage>
</organism>
<reference key="1">
    <citation type="journal article" date="2005" name="Genome Biol.">
        <title>Full-length cDNAs from chicken bursal lymphocytes to facilitate gene function analysis.</title>
        <authorList>
            <person name="Caldwell R.B."/>
            <person name="Kierzek A.M."/>
            <person name="Arakawa H."/>
            <person name="Bezzubov Y."/>
            <person name="Zaim J."/>
            <person name="Fiedler P."/>
            <person name="Kutter S."/>
            <person name="Blagodatski A."/>
            <person name="Kostovska D."/>
            <person name="Koter M."/>
            <person name="Plachy J."/>
            <person name="Carninci P."/>
            <person name="Hayashizaki Y."/>
            <person name="Buerstedde J.-M."/>
        </authorList>
    </citation>
    <scope>NUCLEOTIDE SEQUENCE [LARGE SCALE MRNA]</scope>
    <source>
        <strain>CB</strain>
        <tissue>Bursa of Fabricius</tissue>
    </source>
</reference>
<gene>
    <name type="primary">ANKRD52</name>
    <name type="ORF">RCJMB04_6l3</name>
</gene>
<sequence>MGILSITDQPPLVQAIFNRDVEEVRSLLNQKENINVLDQERRTPLHTAAYIGDVAILELLILSGANVNAKDTVWLTPLHRAAASRNEKALHLLLKHSADVNARDKYWQTPLHVAAANRATKCVEAIIPLLSTVNVADRTGRTALHHAVHSGHLEMVNLLLNKGASLSTCDKKDRQPIHWAAFLGHLEVLKLLVARGADVMCKDKKGYTLLHTAAASGQIEVVRHLLRLGVEIDEPNSFGNTALHIACYMGQDAVANELVNYGANVNQPNEKGFTPLHFAAVSTNGALCLELLVNNGADVNFQSKEGKSPLHMAAIHGRFTRSQILIQNGSEIDCADKYGNTPLHVAARYGHELLISTLMTNGADTARRGIHDMFPLHLAVLFGFSDCCRKLLSSGQLYSIVSSLSNEHVLSAGFDINTPDNLGRTCLHAAASGGNVECLNLLLSSGADLRRRDKFGRTPLHYAAANGSYQCTVTLVTAGASINEADCKGCTPLHYAAASDTYRRAETHSGNSHDTDEEPLKESRMKEAFFCLEFLLDNGADPSLRDKQGYTAVHYAAAYGNRQNLELLLEMSFNCLEDVESTIPVSPLHLAAYNGHCEALKTLAETLVNLDVRDHKGRTALYLATERGSTECVEVLTSHGASALVKERKRKWTPLHAAAANGNTDSLHLLIDSGERADITDVMDIHGQTPLMLAIMNGHVDCVHLLLEKGSTADAADKRGRTALHRGAVTGCEDCLAALLDHDAFVLCRDFKGRTPIHFASACGHLEILRTLLQAALSTDPLDSVVDYSGYSPMHWASYSGHEDCLELLLEHNPFAYLEGNPFTPLHCAVINNQDSTAEMLVEALGAKIVNSRDAKGRTPLHAAAFADNIHGLQLLLRHQAEVDTTDKLGRTPLMMASENGHTAAVEFLLYQAKANITVLDVNKNTALHLACSKGHEKCALLILGETQDLGLINASNSALQMPLHIAARNGLATVVQALLSRGATVLAVDEEGHTPALACAPNKDVADCLALILSTMKPFPPKDAISSFSFNLLKNCGIAAKTAACGALPNGSTCPYSKDRHNAIGLDGCYSE</sequence>
<proteinExistence type="evidence at transcript level"/>
<comment type="function">
    <text evidence="1">Putative regulatory subunit of protein phosphatase 6 (PP6) that may be involved in the recognition of phosphoprotein substrates.</text>
</comment>
<comment type="subunit">
    <text evidence="1">Protein phosphatase 6 (PP6) holoenzyme is proposed to be a heterotrimeric complex formed by the catalytic subunit, a SAPS domain-containing subunit (PP6R) and an ankyrin repeat-domain containing regulatory subunit (ARS).</text>
</comment>
<name>ANR52_CHICK</name>
<protein>
    <recommendedName>
        <fullName>Serine/threonine-protein phosphatase 6 regulatory ankyrin repeat subunit C</fullName>
        <shortName>PP6-ARS-C</shortName>
        <shortName>Serine/threonine-protein phosphatase 6 regulatory subunit ARS-C</shortName>
    </recommendedName>
</protein>
<accession>Q5ZLC8</accession>
<evidence type="ECO:0000250" key="1"/>
<keyword id="KW-0040">ANK repeat</keyword>
<keyword id="KW-1185">Reference proteome</keyword>
<keyword id="KW-0677">Repeat</keyword>
<dbReference type="EMBL" id="AJ719806">
    <property type="protein sequence ID" value="CAG31465.1"/>
    <property type="molecule type" value="mRNA"/>
</dbReference>
<dbReference type="RefSeq" id="NP_001012957.1">
    <property type="nucleotide sequence ID" value="NM_001012939.1"/>
</dbReference>
<dbReference type="SMR" id="Q5ZLC8"/>
<dbReference type="FunCoup" id="Q5ZLC8">
    <property type="interactions" value="628"/>
</dbReference>
<dbReference type="STRING" id="9031.ENSGALP00000058066"/>
<dbReference type="PaxDb" id="9031-ENSGALP00000023054"/>
<dbReference type="GeneID" id="426469"/>
<dbReference type="KEGG" id="gga:426469"/>
<dbReference type="CTD" id="283373"/>
<dbReference type="VEuPathDB" id="HostDB:geneid_426469"/>
<dbReference type="eggNOG" id="KOG0504">
    <property type="taxonomic scope" value="Eukaryota"/>
</dbReference>
<dbReference type="eggNOG" id="KOG0512">
    <property type="taxonomic scope" value="Eukaryota"/>
</dbReference>
<dbReference type="InParanoid" id="Q5ZLC8"/>
<dbReference type="OrthoDB" id="7464126at2759"/>
<dbReference type="PhylomeDB" id="Q5ZLC8"/>
<dbReference type="PRO" id="PR:Q5ZLC8"/>
<dbReference type="Proteomes" id="UP000000539">
    <property type="component" value="Unassembled WGS sequence"/>
</dbReference>
<dbReference type="GO" id="GO:0005929">
    <property type="term" value="C:cilium"/>
    <property type="evidence" value="ECO:0000318"/>
    <property type="project" value="GO_Central"/>
</dbReference>
<dbReference type="GO" id="GO:1904108">
    <property type="term" value="P:protein localization to ciliary inversin compartment"/>
    <property type="evidence" value="ECO:0000318"/>
    <property type="project" value="GO_Central"/>
</dbReference>
<dbReference type="Gene3D" id="1.25.40.20">
    <property type="entry name" value="Ankyrin repeat-containing domain"/>
    <property type="match status" value="10"/>
</dbReference>
<dbReference type="InterPro" id="IPR002110">
    <property type="entry name" value="Ankyrin_rpt"/>
</dbReference>
<dbReference type="InterPro" id="IPR036770">
    <property type="entry name" value="Ankyrin_rpt-contain_sf"/>
</dbReference>
<dbReference type="PANTHER" id="PTHR24198">
    <property type="entry name" value="ANKYRIN REPEAT AND PROTEIN KINASE DOMAIN-CONTAINING PROTEIN"/>
    <property type="match status" value="1"/>
</dbReference>
<dbReference type="PANTHER" id="PTHR24198:SF192">
    <property type="entry name" value="SERINE_THREONINE-PROTEIN PHOSPHATASE 6 REGULATORY ANKYRIN REPEAT SUBUNIT A"/>
    <property type="match status" value="1"/>
</dbReference>
<dbReference type="Pfam" id="PF00023">
    <property type="entry name" value="Ank"/>
    <property type="match status" value="2"/>
</dbReference>
<dbReference type="Pfam" id="PF12796">
    <property type="entry name" value="Ank_2"/>
    <property type="match status" value="8"/>
</dbReference>
<dbReference type="Pfam" id="PF13637">
    <property type="entry name" value="Ank_4"/>
    <property type="match status" value="2"/>
</dbReference>
<dbReference type="PRINTS" id="PR01415">
    <property type="entry name" value="ANKYRIN"/>
</dbReference>
<dbReference type="SMART" id="SM00248">
    <property type="entry name" value="ANK"/>
    <property type="match status" value="28"/>
</dbReference>
<dbReference type="SUPFAM" id="SSF48403">
    <property type="entry name" value="Ankyrin repeat"/>
    <property type="match status" value="3"/>
</dbReference>
<dbReference type="PROSITE" id="PS50297">
    <property type="entry name" value="ANK_REP_REGION"/>
    <property type="match status" value="1"/>
</dbReference>
<dbReference type="PROSITE" id="PS50088">
    <property type="entry name" value="ANK_REPEAT"/>
    <property type="match status" value="21"/>
</dbReference>
<feature type="chain" id="PRO_0000244589" description="Serine/threonine-protein phosphatase 6 regulatory ankyrin repeat subunit C">
    <location>
        <begin position="1"/>
        <end position="1073"/>
    </location>
</feature>
<feature type="repeat" description="ANK 1">
    <location>
        <begin position="7"/>
        <end position="36"/>
    </location>
</feature>
<feature type="repeat" description="ANK 2">
    <location>
        <begin position="40"/>
        <end position="69"/>
    </location>
</feature>
<feature type="repeat" description="ANK 3">
    <location>
        <begin position="73"/>
        <end position="102"/>
    </location>
</feature>
<feature type="repeat" description="ANK 4">
    <location>
        <begin position="106"/>
        <end position="135"/>
    </location>
</feature>
<feature type="repeat" description="ANK 5">
    <location>
        <begin position="139"/>
        <end position="168"/>
    </location>
</feature>
<feature type="repeat" description="ANK 6">
    <location>
        <begin position="172"/>
        <end position="201"/>
    </location>
</feature>
<feature type="repeat" description="ANK 7">
    <location>
        <begin position="205"/>
        <end position="234"/>
    </location>
</feature>
<feature type="repeat" description="ANK 8">
    <location>
        <begin position="238"/>
        <end position="267"/>
    </location>
</feature>
<feature type="repeat" description="ANK 9">
    <location>
        <begin position="271"/>
        <end position="301"/>
    </location>
</feature>
<feature type="repeat" description="ANK 10">
    <location>
        <begin position="305"/>
        <end position="334"/>
    </location>
</feature>
<feature type="repeat" description="ANK 11">
    <location>
        <begin position="338"/>
        <end position="367"/>
    </location>
</feature>
<feature type="repeat" description="ANK 12">
    <location>
        <begin position="371"/>
        <end position="400"/>
    </location>
</feature>
<feature type="repeat" description="ANK 13">
    <location>
        <begin position="422"/>
        <end position="451"/>
    </location>
</feature>
<feature type="repeat" description="ANK 14">
    <location>
        <begin position="455"/>
        <end position="484"/>
    </location>
</feature>
<feature type="repeat" description="ANK 15">
    <location>
        <begin position="488"/>
        <end position="544"/>
    </location>
</feature>
<feature type="repeat" description="ANK 16">
    <location>
        <begin position="548"/>
        <end position="578"/>
    </location>
</feature>
<feature type="repeat" description="ANK 17">
    <location>
        <begin position="583"/>
        <end position="612"/>
    </location>
</feature>
<feature type="repeat" description="ANK 18">
    <location>
        <begin position="616"/>
        <end position="645"/>
    </location>
</feature>
<feature type="repeat" description="ANK 19">
    <location>
        <begin position="650"/>
        <end position="679"/>
    </location>
</feature>
<feature type="repeat" description="ANK 20">
    <location>
        <begin position="686"/>
        <end position="715"/>
    </location>
</feature>
<feature type="repeat" description="ANK 21">
    <location>
        <begin position="719"/>
        <end position="748"/>
    </location>
</feature>
<feature type="repeat" description="ANK 22">
    <location>
        <begin position="752"/>
        <end position="781"/>
    </location>
</feature>
<feature type="repeat" description="ANK 23">
    <location>
        <begin position="789"/>
        <end position="818"/>
    </location>
</feature>
<feature type="repeat" description="ANK 24">
    <location>
        <begin position="821"/>
        <end position="851"/>
    </location>
</feature>
<feature type="repeat" description="ANK 25">
    <location>
        <begin position="856"/>
        <end position="885"/>
    </location>
</feature>
<feature type="repeat" description="ANK 26">
    <location>
        <begin position="889"/>
        <end position="919"/>
    </location>
</feature>
<feature type="repeat" description="ANK 27">
    <location>
        <begin position="923"/>
        <end position="952"/>
    </location>
</feature>
<feature type="repeat" description="ANK 28">
    <location>
        <begin position="959"/>
        <end position="988"/>
    </location>
</feature>